<organism>
    <name type="scientific">Bordetella avium (strain 197N)</name>
    <dbReference type="NCBI Taxonomy" id="360910"/>
    <lineage>
        <taxon>Bacteria</taxon>
        <taxon>Pseudomonadati</taxon>
        <taxon>Pseudomonadota</taxon>
        <taxon>Betaproteobacteria</taxon>
        <taxon>Burkholderiales</taxon>
        <taxon>Alcaligenaceae</taxon>
        <taxon>Bordetella</taxon>
    </lineage>
</organism>
<comment type="function">
    <text evidence="1">Part of the ABC transporter complex HmuTUV involved in hemin import. Responsible for energy coupling to the transport system.</text>
</comment>
<comment type="subunit">
    <text evidence="1">The complex is composed of two ATP-binding proteins (HmuV), two transmembrane proteins (HmuU) and a solute-binding protein (HmuT).</text>
</comment>
<comment type="subcellular location">
    <subcellularLocation>
        <location evidence="1">Cell inner membrane</location>
        <topology evidence="1">Peripheral membrane protein</topology>
    </subcellularLocation>
</comment>
<comment type="similarity">
    <text evidence="1">Belongs to the ABC transporter superfamily. Heme (hemin) importer (TC 3.A.1.14.5) family.</text>
</comment>
<accession>Q2KUC0</accession>
<sequence>MTLQAQDLSVDRGAKRILTQVSLTLEPGRMLGLLGANGAGKSTLLACLSGELEPVCGHIEINGKPLRSLASAKQARLRAVLPQKPSLSFDLGVREVVGMGAYPYAELSPADVDALCEKALRQAGVSHLAGRRYLELSGGEQQRVQFARVLMQCQAAPAGQPRYLMLDEPISNLDPRHQIDVLRTAHDLAREAGVGVLVIVHDVNLSARWCDRLLLLAQGSVVADGAPAEVLTPANLRRVYGVEADVLPHPREAGTLLVLMR</sequence>
<dbReference type="EC" id="7.6.2.-" evidence="1"/>
<dbReference type="EMBL" id="AM167904">
    <property type="protein sequence ID" value="CAJ50740.1"/>
    <property type="molecule type" value="Genomic_DNA"/>
</dbReference>
<dbReference type="RefSeq" id="WP_012418768.1">
    <property type="nucleotide sequence ID" value="NC_010645.1"/>
</dbReference>
<dbReference type="SMR" id="Q2KUC0"/>
<dbReference type="STRING" id="360910.BAV3130"/>
<dbReference type="GeneID" id="92933613"/>
<dbReference type="KEGG" id="bav:BAV3130"/>
<dbReference type="eggNOG" id="COG1120">
    <property type="taxonomic scope" value="Bacteria"/>
</dbReference>
<dbReference type="HOGENOM" id="CLU_000604_1_11_4"/>
<dbReference type="OrthoDB" id="5296765at2"/>
<dbReference type="Proteomes" id="UP000001977">
    <property type="component" value="Chromosome"/>
</dbReference>
<dbReference type="GO" id="GO:0005886">
    <property type="term" value="C:plasma membrane"/>
    <property type="evidence" value="ECO:0007669"/>
    <property type="project" value="UniProtKB-SubCell"/>
</dbReference>
<dbReference type="GO" id="GO:0005524">
    <property type="term" value="F:ATP binding"/>
    <property type="evidence" value="ECO:0007669"/>
    <property type="project" value="UniProtKB-KW"/>
</dbReference>
<dbReference type="GO" id="GO:0016887">
    <property type="term" value="F:ATP hydrolysis activity"/>
    <property type="evidence" value="ECO:0007669"/>
    <property type="project" value="InterPro"/>
</dbReference>
<dbReference type="CDD" id="cd03214">
    <property type="entry name" value="ABC_Iron-Siderophores_B12_Hemin"/>
    <property type="match status" value="1"/>
</dbReference>
<dbReference type="Gene3D" id="3.40.50.300">
    <property type="entry name" value="P-loop containing nucleotide triphosphate hydrolases"/>
    <property type="match status" value="1"/>
</dbReference>
<dbReference type="InterPro" id="IPR003593">
    <property type="entry name" value="AAA+_ATPase"/>
</dbReference>
<dbReference type="InterPro" id="IPR003439">
    <property type="entry name" value="ABC_transporter-like_ATP-bd"/>
</dbReference>
<dbReference type="InterPro" id="IPR017871">
    <property type="entry name" value="ABC_transporter-like_CS"/>
</dbReference>
<dbReference type="InterPro" id="IPR027417">
    <property type="entry name" value="P-loop_NTPase"/>
</dbReference>
<dbReference type="NCBIfam" id="NF010068">
    <property type="entry name" value="PRK13548.1"/>
    <property type="match status" value="1"/>
</dbReference>
<dbReference type="PANTHER" id="PTHR42794">
    <property type="entry name" value="HEMIN IMPORT ATP-BINDING PROTEIN HMUV"/>
    <property type="match status" value="1"/>
</dbReference>
<dbReference type="PANTHER" id="PTHR42794:SF1">
    <property type="entry name" value="HEMIN IMPORT ATP-BINDING PROTEIN HMUV"/>
    <property type="match status" value="1"/>
</dbReference>
<dbReference type="Pfam" id="PF00005">
    <property type="entry name" value="ABC_tran"/>
    <property type="match status" value="1"/>
</dbReference>
<dbReference type="SMART" id="SM00382">
    <property type="entry name" value="AAA"/>
    <property type="match status" value="1"/>
</dbReference>
<dbReference type="SUPFAM" id="SSF52540">
    <property type="entry name" value="P-loop containing nucleoside triphosphate hydrolases"/>
    <property type="match status" value="1"/>
</dbReference>
<dbReference type="PROSITE" id="PS00211">
    <property type="entry name" value="ABC_TRANSPORTER_1"/>
    <property type="match status" value="1"/>
</dbReference>
<dbReference type="PROSITE" id="PS50893">
    <property type="entry name" value="ABC_TRANSPORTER_2"/>
    <property type="match status" value="1"/>
</dbReference>
<dbReference type="PROSITE" id="PS51261">
    <property type="entry name" value="HMUV"/>
    <property type="match status" value="1"/>
</dbReference>
<keyword id="KW-0067">ATP-binding</keyword>
<keyword id="KW-0997">Cell inner membrane</keyword>
<keyword id="KW-1003">Cell membrane</keyword>
<keyword id="KW-0472">Membrane</keyword>
<keyword id="KW-0547">Nucleotide-binding</keyword>
<keyword id="KW-1185">Reference proteome</keyword>
<keyword id="KW-1278">Translocase</keyword>
<keyword id="KW-0813">Transport</keyword>
<proteinExistence type="inferred from homology"/>
<reference key="1">
    <citation type="journal article" date="2006" name="J. Bacteriol.">
        <title>Comparison of the genome sequence of the poultry pathogen Bordetella avium with those of B. bronchiseptica, B. pertussis, and B. parapertussis reveals extensive diversity in surface structures associated with host interaction.</title>
        <authorList>
            <person name="Sebaihia M."/>
            <person name="Preston A."/>
            <person name="Maskell D.J."/>
            <person name="Kuzmiak H."/>
            <person name="Connell T.D."/>
            <person name="King N.D."/>
            <person name="Orndorff P.E."/>
            <person name="Miyamoto D.M."/>
            <person name="Thomson N.R."/>
            <person name="Harris D."/>
            <person name="Goble A."/>
            <person name="Lord A."/>
            <person name="Murphy L."/>
            <person name="Quail M.A."/>
            <person name="Rutter S."/>
            <person name="Squares R."/>
            <person name="Squares S."/>
            <person name="Woodward J."/>
            <person name="Parkhill J."/>
            <person name="Temple L.M."/>
        </authorList>
    </citation>
    <scope>NUCLEOTIDE SEQUENCE [LARGE SCALE GENOMIC DNA]</scope>
    <source>
        <strain>197N</strain>
    </source>
</reference>
<feature type="chain" id="PRO_0000269575" description="Hemin import ATP-binding protein HmuV">
    <location>
        <begin position="1"/>
        <end position="261"/>
    </location>
</feature>
<feature type="domain" description="ABC transporter" evidence="1">
    <location>
        <begin position="3"/>
        <end position="243"/>
    </location>
</feature>
<feature type="binding site" evidence="1">
    <location>
        <begin position="35"/>
        <end position="42"/>
    </location>
    <ligand>
        <name>ATP</name>
        <dbReference type="ChEBI" id="CHEBI:30616"/>
    </ligand>
</feature>
<name>HMUV_BORA1</name>
<gene>
    <name evidence="1" type="primary">hmuV</name>
    <name type="synonym">bhuV</name>
    <name type="ordered locus">BAV3130</name>
</gene>
<protein>
    <recommendedName>
        <fullName evidence="1">Hemin import ATP-binding protein HmuV</fullName>
        <ecNumber evidence="1">7.6.2.-</ecNumber>
    </recommendedName>
</protein>
<evidence type="ECO:0000255" key="1">
    <source>
        <dbReference type="HAMAP-Rule" id="MF_01718"/>
    </source>
</evidence>